<keyword id="KW-0539">Nucleus</keyword>
<keyword id="KW-1185">Reference proteome</keyword>
<keyword id="KW-0804">Transcription</keyword>
<keyword id="KW-0805">Transcription regulation</keyword>
<sequence length="195" mass="22130">MSFTSKTSKSHAEATVNKLFSSLLPGTQGTTSKQSSSLSSAELLSIEIENKNKLSKEELKKIHKQNKFKQHKKIKKALEDEKRFNKLAKYHLIKHHKTGGELSEEEAKYLKKLVKKNVNSLNRVSEIDDMEIKSELDQVRQDILKINKEKHDKKAKRIQNKKTKDFNSKVAKGMISYPGLTPGLAPVGLDDSDDE</sequence>
<feature type="chain" id="PRO_0000404341" description="Regulator of rDNA transcription 14">
    <location>
        <begin position="1"/>
        <end position="195"/>
    </location>
</feature>
<name>RRT14_DEBHA</name>
<evidence type="ECO:0000250" key="1"/>
<evidence type="ECO:0000305" key="2"/>
<proteinExistence type="inferred from homology"/>
<reference key="1">
    <citation type="journal article" date="2004" name="Nature">
        <title>Genome evolution in yeasts.</title>
        <authorList>
            <person name="Dujon B."/>
            <person name="Sherman D."/>
            <person name="Fischer G."/>
            <person name="Durrens P."/>
            <person name="Casaregola S."/>
            <person name="Lafontaine I."/>
            <person name="de Montigny J."/>
            <person name="Marck C."/>
            <person name="Neuveglise C."/>
            <person name="Talla E."/>
            <person name="Goffard N."/>
            <person name="Frangeul L."/>
            <person name="Aigle M."/>
            <person name="Anthouard V."/>
            <person name="Babour A."/>
            <person name="Barbe V."/>
            <person name="Barnay S."/>
            <person name="Blanchin S."/>
            <person name="Beckerich J.-M."/>
            <person name="Beyne E."/>
            <person name="Bleykasten C."/>
            <person name="Boisrame A."/>
            <person name="Boyer J."/>
            <person name="Cattolico L."/>
            <person name="Confanioleri F."/>
            <person name="de Daruvar A."/>
            <person name="Despons L."/>
            <person name="Fabre E."/>
            <person name="Fairhead C."/>
            <person name="Ferry-Dumazet H."/>
            <person name="Groppi A."/>
            <person name="Hantraye F."/>
            <person name="Hennequin C."/>
            <person name="Jauniaux N."/>
            <person name="Joyet P."/>
            <person name="Kachouri R."/>
            <person name="Kerrest A."/>
            <person name="Koszul R."/>
            <person name="Lemaire M."/>
            <person name="Lesur I."/>
            <person name="Ma L."/>
            <person name="Muller H."/>
            <person name="Nicaud J.-M."/>
            <person name="Nikolski M."/>
            <person name="Oztas S."/>
            <person name="Ozier-Kalogeropoulos O."/>
            <person name="Pellenz S."/>
            <person name="Potier S."/>
            <person name="Richard G.-F."/>
            <person name="Straub M.-L."/>
            <person name="Suleau A."/>
            <person name="Swennen D."/>
            <person name="Tekaia F."/>
            <person name="Wesolowski-Louvel M."/>
            <person name="Westhof E."/>
            <person name="Wirth B."/>
            <person name="Zeniou-Meyer M."/>
            <person name="Zivanovic Y."/>
            <person name="Bolotin-Fukuhara M."/>
            <person name="Thierry A."/>
            <person name="Bouchier C."/>
            <person name="Caudron B."/>
            <person name="Scarpelli C."/>
            <person name="Gaillardin C."/>
            <person name="Weissenbach J."/>
            <person name="Wincker P."/>
            <person name="Souciet J.-L."/>
        </authorList>
    </citation>
    <scope>NUCLEOTIDE SEQUENCE [LARGE SCALE GENOMIC DNA]</scope>
    <source>
        <strain>ATCC 36239 / CBS 767 / BCRC 21394 / JCM 1990 / NBRC 0083 / IGC 2968</strain>
    </source>
</reference>
<protein>
    <recommendedName>
        <fullName>Regulator of rDNA transcription 14</fullName>
    </recommendedName>
</protein>
<organism>
    <name type="scientific">Debaryomyces hansenii (strain ATCC 36239 / CBS 767 / BCRC 21394 / JCM 1990 / NBRC 0083 / IGC 2968)</name>
    <name type="common">Yeast</name>
    <name type="synonym">Torulaspora hansenii</name>
    <dbReference type="NCBI Taxonomy" id="284592"/>
    <lineage>
        <taxon>Eukaryota</taxon>
        <taxon>Fungi</taxon>
        <taxon>Dikarya</taxon>
        <taxon>Ascomycota</taxon>
        <taxon>Saccharomycotina</taxon>
        <taxon>Pichiomycetes</taxon>
        <taxon>Debaryomycetaceae</taxon>
        <taxon>Debaryomyces</taxon>
    </lineage>
</organism>
<gene>
    <name type="primary">RRT14</name>
    <name type="ordered locus">DEHA2A09174g</name>
</gene>
<comment type="function">
    <text evidence="1">Involved in ribosome biogenesis, probably through modulation of rDNA transcription.</text>
</comment>
<comment type="subcellular location">
    <subcellularLocation>
        <location evidence="1">Nucleus</location>
        <location evidence="1">Nucleolus</location>
    </subcellularLocation>
</comment>
<comment type="similarity">
    <text evidence="2">Belongs to the RRT14 family.</text>
</comment>
<dbReference type="EMBL" id="CR382133">
    <property type="protein sequence ID" value="CAG84687.1"/>
    <property type="molecule type" value="Genomic_DNA"/>
</dbReference>
<dbReference type="RefSeq" id="XP_456728.1">
    <property type="nucleotide sequence ID" value="XM_456728.1"/>
</dbReference>
<dbReference type="SMR" id="Q6BYJ1"/>
<dbReference type="FunCoup" id="Q6BYJ1">
    <property type="interactions" value="276"/>
</dbReference>
<dbReference type="STRING" id="284592.Q6BYJ1"/>
<dbReference type="GeneID" id="2899807"/>
<dbReference type="KEGG" id="dha:DEHA2A09174g"/>
<dbReference type="VEuPathDB" id="FungiDB:DEHA2A09174g"/>
<dbReference type="eggNOG" id="ENOG502S1G1">
    <property type="taxonomic scope" value="Eukaryota"/>
</dbReference>
<dbReference type="HOGENOM" id="CLU_095038_0_0_1"/>
<dbReference type="InParanoid" id="Q6BYJ1"/>
<dbReference type="OMA" id="LNNTKQV"/>
<dbReference type="OrthoDB" id="4069371at2759"/>
<dbReference type="Proteomes" id="UP000000599">
    <property type="component" value="Chromosome A"/>
</dbReference>
<dbReference type="GO" id="GO:0005730">
    <property type="term" value="C:nucleolus"/>
    <property type="evidence" value="ECO:0007669"/>
    <property type="project" value="UniProtKB-SubCell"/>
</dbReference>
<dbReference type="InterPro" id="IPR031404">
    <property type="entry name" value="Rrt14"/>
</dbReference>
<dbReference type="Pfam" id="PF17075">
    <property type="entry name" value="RRT14"/>
    <property type="match status" value="1"/>
</dbReference>
<accession>Q6BYJ1</accession>